<proteinExistence type="inferred from homology"/>
<accession>Q48BQ5</accession>
<evidence type="ECO:0000255" key="1">
    <source>
        <dbReference type="HAMAP-Rule" id="MF_01635"/>
    </source>
</evidence>
<keyword id="KW-0997">Cell inner membrane</keyword>
<keyword id="KW-1003">Cell membrane</keyword>
<keyword id="KW-0460">Magnesium</keyword>
<keyword id="KW-0472">Membrane</keyword>
<keyword id="KW-0808">Transferase</keyword>
<keyword id="KW-0812">Transmembrane</keyword>
<keyword id="KW-1133">Transmembrane helix</keyword>
<keyword id="KW-0831">Ubiquinone biosynthesis</keyword>
<sequence>MYLSLLKSLNRLSPRAWDFIQLTRIDKPIGIYLLLWPTLWAVWIAGKGSPSLKTVFIFVVGVFLMRAAGCVINDFADRKVDGHVKRTEQRPLISGKVSSREALALFAVLVGLSFVLVLFTNATTIWLSFGGLALAACYPFMKRYTYYPQVVLGAAFSWGMPMAFTAETGDLPAAAWLLYIANLLWTVGYDTYYAMVDRDDDLKIGVKSTAVLFGDADRVIILTLQGLALGCLMLAGARFELGACFYIGLLAAAGCFAWEFWSTRQRERDACFKAFLHNHWAGLAIFLGIVADYAVR</sequence>
<comment type="function">
    <text evidence="1">Catalyzes the prenylation of para-hydroxybenzoate (PHB) with an all-trans polyprenyl group. Mediates the second step in the final reaction sequence of ubiquinone-8 (UQ-8) biosynthesis, which is the condensation of the polyisoprenoid side chain with PHB, generating the first membrane-bound Q intermediate 3-octaprenyl-4-hydroxybenzoate.</text>
</comment>
<comment type="catalytic activity">
    <reaction evidence="1">
        <text>all-trans-octaprenyl diphosphate + 4-hydroxybenzoate = 4-hydroxy-3-(all-trans-octaprenyl)benzoate + diphosphate</text>
        <dbReference type="Rhea" id="RHEA:27782"/>
        <dbReference type="ChEBI" id="CHEBI:1617"/>
        <dbReference type="ChEBI" id="CHEBI:17879"/>
        <dbReference type="ChEBI" id="CHEBI:33019"/>
        <dbReference type="ChEBI" id="CHEBI:57711"/>
        <dbReference type="EC" id="2.5.1.39"/>
    </reaction>
</comment>
<comment type="cofactor">
    <cofactor evidence="1">
        <name>Mg(2+)</name>
        <dbReference type="ChEBI" id="CHEBI:18420"/>
    </cofactor>
</comment>
<comment type="pathway">
    <text evidence="1">Cofactor biosynthesis; ubiquinone biosynthesis.</text>
</comment>
<comment type="subcellular location">
    <subcellularLocation>
        <location evidence="1">Cell inner membrane</location>
        <topology evidence="1">Multi-pass membrane protein</topology>
    </subcellularLocation>
</comment>
<comment type="similarity">
    <text evidence="1">Belongs to the UbiA prenyltransferase family.</text>
</comment>
<gene>
    <name evidence="1" type="primary">ubiA</name>
    <name type="ordered locus">PSPPH_5113</name>
</gene>
<dbReference type="EC" id="2.5.1.39" evidence="1"/>
<dbReference type="EMBL" id="CP000058">
    <property type="protein sequence ID" value="AAZ34564.1"/>
    <property type="molecule type" value="Genomic_DNA"/>
</dbReference>
<dbReference type="RefSeq" id="WP_004659057.1">
    <property type="nucleotide sequence ID" value="NC_005773.3"/>
</dbReference>
<dbReference type="SMR" id="Q48BQ5"/>
<dbReference type="KEGG" id="psp:PSPPH_5113"/>
<dbReference type="eggNOG" id="COG0382">
    <property type="taxonomic scope" value="Bacteria"/>
</dbReference>
<dbReference type="HOGENOM" id="CLU_034879_1_0_6"/>
<dbReference type="UniPathway" id="UPA00232"/>
<dbReference type="Proteomes" id="UP000000551">
    <property type="component" value="Chromosome"/>
</dbReference>
<dbReference type="GO" id="GO:0005886">
    <property type="term" value="C:plasma membrane"/>
    <property type="evidence" value="ECO:0007669"/>
    <property type="project" value="UniProtKB-SubCell"/>
</dbReference>
<dbReference type="GO" id="GO:0008412">
    <property type="term" value="F:4-hydroxybenzoate polyprenyltransferase activity"/>
    <property type="evidence" value="ECO:0007669"/>
    <property type="project" value="UniProtKB-UniRule"/>
</dbReference>
<dbReference type="GO" id="GO:0006744">
    <property type="term" value="P:ubiquinone biosynthetic process"/>
    <property type="evidence" value="ECO:0007669"/>
    <property type="project" value="UniProtKB-UniRule"/>
</dbReference>
<dbReference type="CDD" id="cd13959">
    <property type="entry name" value="PT_UbiA_COQ2"/>
    <property type="match status" value="1"/>
</dbReference>
<dbReference type="FunFam" id="1.10.357.140:FF:000002">
    <property type="entry name" value="4-hydroxybenzoate octaprenyltransferase"/>
    <property type="match status" value="1"/>
</dbReference>
<dbReference type="FunFam" id="1.20.120.1780:FF:000001">
    <property type="entry name" value="4-hydroxybenzoate octaprenyltransferase"/>
    <property type="match status" value="1"/>
</dbReference>
<dbReference type="Gene3D" id="1.10.357.140">
    <property type="entry name" value="UbiA prenyltransferase"/>
    <property type="match status" value="1"/>
</dbReference>
<dbReference type="Gene3D" id="1.20.120.1780">
    <property type="entry name" value="UbiA prenyltransferase"/>
    <property type="match status" value="1"/>
</dbReference>
<dbReference type="HAMAP" id="MF_01635">
    <property type="entry name" value="UbiA"/>
    <property type="match status" value="1"/>
</dbReference>
<dbReference type="InterPro" id="IPR006370">
    <property type="entry name" value="HB_polyprenyltransferase-like"/>
</dbReference>
<dbReference type="InterPro" id="IPR039653">
    <property type="entry name" value="Prenyltransferase"/>
</dbReference>
<dbReference type="InterPro" id="IPR000537">
    <property type="entry name" value="UbiA_prenyltransferase"/>
</dbReference>
<dbReference type="InterPro" id="IPR044878">
    <property type="entry name" value="UbiA_sf"/>
</dbReference>
<dbReference type="NCBIfam" id="TIGR01474">
    <property type="entry name" value="ubiA_proteo"/>
    <property type="match status" value="1"/>
</dbReference>
<dbReference type="PANTHER" id="PTHR11048:SF28">
    <property type="entry name" value="4-HYDROXYBENZOATE POLYPRENYLTRANSFERASE, MITOCHONDRIAL"/>
    <property type="match status" value="1"/>
</dbReference>
<dbReference type="PANTHER" id="PTHR11048">
    <property type="entry name" value="PRENYLTRANSFERASES"/>
    <property type="match status" value="1"/>
</dbReference>
<dbReference type="Pfam" id="PF01040">
    <property type="entry name" value="UbiA"/>
    <property type="match status" value="1"/>
</dbReference>
<organism>
    <name type="scientific">Pseudomonas savastanoi pv. phaseolicola (strain 1448A / Race 6)</name>
    <name type="common">Pseudomonas syringae pv. phaseolicola (strain 1448A / Race 6)</name>
    <dbReference type="NCBI Taxonomy" id="264730"/>
    <lineage>
        <taxon>Bacteria</taxon>
        <taxon>Pseudomonadati</taxon>
        <taxon>Pseudomonadota</taxon>
        <taxon>Gammaproteobacteria</taxon>
        <taxon>Pseudomonadales</taxon>
        <taxon>Pseudomonadaceae</taxon>
        <taxon>Pseudomonas</taxon>
    </lineage>
</organism>
<name>UBIA_PSE14</name>
<reference key="1">
    <citation type="journal article" date="2005" name="J. Bacteriol.">
        <title>Whole-genome sequence analysis of Pseudomonas syringae pv. phaseolicola 1448A reveals divergence among pathovars in genes involved in virulence and transposition.</title>
        <authorList>
            <person name="Joardar V."/>
            <person name="Lindeberg M."/>
            <person name="Jackson R.W."/>
            <person name="Selengut J."/>
            <person name="Dodson R."/>
            <person name="Brinkac L.M."/>
            <person name="Daugherty S.C."/>
            <person name="DeBoy R.T."/>
            <person name="Durkin A.S."/>
            <person name="Gwinn Giglio M."/>
            <person name="Madupu R."/>
            <person name="Nelson W.C."/>
            <person name="Rosovitz M.J."/>
            <person name="Sullivan S.A."/>
            <person name="Crabtree J."/>
            <person name="Creasy T."/>
            <person name="Davidsen T.M."/>
            <person name="Haft D.H."/>
            <person name="Zafar N."/>
            <person name="Zhou L."/>
            <person name="Halpin R."/>
            <person name="Holley T."/>
            <person name="Khouri H.M."/>
            <person name="Feldblyum T.V."/>
            <person name="White O."/>
            <person name="Fraser C.M."/>
            <person name="Chatterjee A.K."/>
            <person name="Cartinhour S."/>
            <person name="Schneider D."/>
            <person name="Mansfield J.W."/>
            <person name="Collmer A."/>
            <person name="Buell R."/>
        </authorList>
    </citation>
    <scope>NUCLEOTIDE SEQUENCE [LARGE SCALE GENOMIC DNA]</scope>
    <source>
        <strain>1448A / Race 6</strain>
    </source>
</reference>
<protein>
    <recommendedName>
        <fullName evidence="1">4-hydroxybenzoate octaprenyltransferase</fullName>
        <ecNumber evidence="1">2.5.1.39</ecNumber>
    </recommendedName>
    <alternativeName>
        <fullName evidence="1">4-HB polyprenyltransferase</fullName>
    </alternativeName>
</protein>
<feature type="chain" id="PRO_0000262823" description="4-hydroxybenzoate octaprenyltransferase">
    <location>
        <begin position="1"/>
        <end position="296"/>
    </location>
</feature>
<feature type="transmembrane region" description="Helical" evidence="1">
    <location>
        <begin position="28"/>
        <end position="48"/>
    </location>
</feature>
<feature type="transmembrane region" description="Helical" evidence="1">
    <location>
        <begin position="52"/>
        <end position="72"/>
    </location>
</feature>
<feature type="transmembrane region" description="Helical" evidence="1">
    <location>
        <begin position="102"/>
        <end position="122"/>
    </location>
</feature>
<feature type="transmembrane region" description="Helical" evidence="1">
    <location>
        <begin position="146"/>
        <end position="166"/>
    </location>
</feature>
<feature type="transmembrane region" description="Helical" evidence="1">
    <location>
        <begin position="169"/>
        <end position="189"/>
    </location>
</feature>
<feature type="transmembrane region" description="Helical" evidence="1">
    <location>
        <begin position="219"/>
        <end position="239"/>
    </location>
</feature>
<feature type="transmembrane region" description="Helical" evidence="1">
    <location>
        <begin position="241"/>
        <end position="261"/>
    </location>
</feature>
<feature type="transmembrane region" description="Helical" evidence="1">
    <location>
        <begin position="275"/>
        <end position="295"/>
    </location>
</feature>